<evidence type="ECO:0000250" key="1"/>
<evidence type="ECO:0000250" key="2">
    <source>
        <dbReference type="UniProtKB" id="P53600"/>
    </source>
</evidence>
<evidence type="ECO:0000305" key="3"/>
<feature type="chain" id="PRO_0000285611" description="Coatomer subunit zeta-2">
    <location>
        <begin position="1"/>
        <end position="179"/>
    </location>
</feature>
<feature type="splice variant" id="VSP_027463" description="In isoform 2." evidence="3">
    <original>VVLETDPNVIAGKVAMQSTEASGSLSEQTLTQALATAREHLARSLLT</original>
    <variation>YASLIV</variation>
    <location>
        <begin position="133"/>
        <end position="179"/>
    </location>
</feature>
<feature type="sequence conflict" description="In Ref. 2; AEE74814." evidence="3" ref="2">
    <original>N</original>
    <variation>K</variation>
    <location>
        <position position="11"/>
    </location>
</feature>
<name>COPZ2_ARATH</name>
<sequence>MSPDSCPLVKNILLLDSEGKRVAVKYYSDDWPTNAAKLSFEKYVFSKTSKTNARTEAEITLLDSNIIVYKFAQDLHFFVTGGENENELILASVLQGFFDAVALLLRSNVEKMEALENLDLIFLCLDEMVDQGVVLETDPNVIAGKVAMQSTEASGSLSEQTLTQALATAREHLARSLLT</sequence>
<protein>
    <recommendedName>
        <fullName>Coatomer subunit zeta-2</fullName>
    </recommendedName>
    <alternativeName>
        <fullName>Zeta-2-coat protein</fullName>
    </alternativeName>
    <alternativeName>
        <fullName>Zeta-COP 2</fullName>
    </alternativeName>
</protein>
<gene>
    <name type="ordered locus">At3g09800</name>
    <name type="ORF">F11F8.39</name>
    <name type="ORF">F8A24.15</name>
</gene>
<accession>Q84LG4</accession>
<accession>F4J1B6</accession>
<accession>Q3E7U0</accession>
<accession>Q9S7S7</accession>
<dbReference type="EMBL" id="AC015985">
    <property type="protein sequence ID" value="AAF23255.1"/>
    <property type="status" value="ALT_SEQ"/>
    <property type="molecule type" value="Genomic_DNA"/>
</dbReference>
<dbReference type="EMBL" id="AC016661">
    <property type="protein sequence ID" value="AAF23308.1"/>
    <property type="status" value="ALT_SEQ"/>
    <property type="molecule type" value="Genomic_DNA"/>
</dbReference>
<dbReference type="EMBL" id="CP002686">
    <property type="protein sequence ID" value="AEE74814.1"/>
    <property type="molecule type" value="Genomic_DNA"/>
</dbReference>
<dbReference type="EMBL" id="BT002902">
    <property type="protein sequence ID" value="AAO22718.1"/>
    <property type="molecule type" value="mRNA"/>
</dbReference>
<dbReference type="EMBL" id="BT015167">
    <property type="protein sequence ID" value="AAT85763.1"/>
    <property type="molecule type" value="mRNA"/>
</dbReference>
<dbReference type="RefSeq" id="NP_001327154.1">
    <property type="nucleotide sequence ID" value="NM_001337845.1"/>
</dbReference>
<dbReference type="RefSeq" id="NP_001327155.1">
    <property type="nucleotide sequence ID" value="NM_001337844.1"/>
</dbReference>
<dbReference type="RefSeq" id="NP_566358.3">
    <property type="nucleotide sequence ID" value="NM_111815.5"/>
</dbReference>
<dbReference type="SMR" id="Q84LG4"/>
<dbReference type="BioGRID" id="5472">
    <property type="interactions" value="5"/>
</dbReference>
<dbReference type="FunCoup" id="Q84LG4">
    <property type="interactions" value="2627"/>
</dbReference>
<dbReference type="IntAct" id="Q84LG4">
    <property type="interactions" value="1"/>
</dbReference>
<dbReference type="STRING" id="3702.Q84LG4"/>
<dbReference type="PaxDb" id="3702-AT3G09800.1"/>
<dbReference type="PeptideAtlas" id="Q84LG4"/>
<dbReference type="ProteomicsDB" id="241176">
    <molecule id="Q84LG4-1"/>
</dbReference>
<dbReference type="DNASU" id="820138"/>
<dbReference type="GeneID" id="820138"/>
<dbReference type="KEGG" id="ath:AT3G09800"/>
<dbReference type="Araport" id="AT3G09800"/>
<dbReference type="TAIR" id="AT3G09800"/>
<dbReference type="eggNOG" id="KOG3343">
    <property type="taxonomic scope" value="Eukaryota"/>
</dbReference>
<dbReference type="HOGENOM" id="CLU_086803_1_1_1"/>
<dbReference type="InParanoid" id="Q84LG4"/>
<dbReference type="OrthoDB" id="10249988at2759"/>
<dbReference type="PhylomeDB" id="Q84LG4"/>
<dbReference type="PRO" id="PR:Q84LG4"/>
<dbReference type="Proteomes" id="UP000006548">
    <property type="component" value="Chromosome 3"/>
</dbReference>
<dbReference type="ExpressionAtlas" id="Q84LG4">
    <property type="expression patterns" value="baseline and differential"/>
</dbReference>
<dbReference type="GO" id="GO:0030126">
    <property type="term" value="C:COPI vesicle coat"/>
    <property type="evidence" value="ECO:0000318"/>
    <property type="project" value="GO_Central"/>
</dbReference>
<dbReference type="GO" id="GO:0000139">
    <property type="term" value="C:Golgi membrane"/>
    <property type="evidence" value="ECO:0007669"/>
    <property type="project" value="UniProtKB-SubCell"/>
</dbReference>
<dbReference type="GO" id="GO:0006891">
    <property type="term" value="P:intra-Golgi vesicle-mediated transport"/>
    <property type="evidence" value="ECO:0000318"/>
    <property type="project" value="GO_Central"/>
</dbReference>
<dbReference type="GO" id="GO:0006886">
    <property type="term" value="P:intracellular protein transport"/>
    <property type="evidence" value="ECO:0000318"/>
    <property type="project" value="GO_Central"/>
</dbReference>
<dbReference type="GO" id="GO:0006890">
    <property type="term" value="P:retrograde vesicle-mediated transport, Golgi to endoplasmic reticulum"/>
    <property type="evidence" value="ECO:0000318"/>
    <property type="project" value="GO_Central"/>
</dbReference>
<dbReference type="CDD" id="cd14829">
    <property type="entry name" value="Zeta-COP"/>
    <property type="match status" value="1"/>
</dbReference>
<dbReference type="FunFam" id="3.30.450.60:FF:000014">
    <property type="entry name" value="Coatomer subunit zeta-2"/>
    <property type="match status" value="1"/>
</dbReference>
<dbReference type="Gene3D" id="3.30.450.60">
    <property type="match status" value="1"/>
</dbReference>
<dbReference type="InterPro" id="IPR022775">
    <property type="entry name" value="AP_mu_sigma_su"/>
</dbReference>
<dbReference type="InterPro" id="IPR039652">
    <property type="entry name" value="Coatomer_zeta"/>
</dbReference>
<dbReference type="InterPro" id="IPR011012">
    <property type="entry name" value="Longin-like_dom_sf"/>
</dbReference>
<dbReference type="PANTHER" id="PTHR11043:SF31">
    <property type="entry name" value="COATOMER SUBUNIT ZETA-2"/>
    <property type="match status" value="1"/>
</dbReference>
<dbReference type="PANTHER" id="PTHR11043">
    <property type="entry name" value="ZETA-COAT PROTEIN"/>
    <property type="match status" value="1"/>
</dbReference>
<dbReference type="Pfam" id="PF01217">
    <property type="entry name" value="Clat_adaptor_s"/>
    <property type="match status" value="1"/>
</dbReference>
<dbReference type="SUPFAM" id="SSF64356">
    <property type="entry name" value="SNARE-like"/>
    <property type="match status" value="1"/>
</dbReference>
<proteinExistence type="evidence at transcript level"/>
<comment type="function">
    <text evidence="2">The coatomer is a cytosolic protein complex that binds to dilysine motifs and reversibly associates with Golgi non-clathrin-coated vesicles, which further mediate biosynthetic protein transport from the ER, via the Golgi up to the trans Golgi network. Coatomer complex is required for budding from Golgi membranes, and is essential for the retrograde Golgi-to-ER transport of dilysine-tagged proteins (By similarity). The zeta subunit may be involved in regulating the coat assembly and, hence, the rate of biosynthetic protein transport due to its association-dissociation properties with the coatomer complex (By similarity).</text>
</comment>
<comment type="subunit">
    <text evidence="1">Oligomeric complex that consists of at least the alpha, beta, beta', gamma, delta, epsilon and zeta subunits.</text>
</comment>
<comment type="subcellular location">
    <subcellularLocation>
        <location evidence="1">Cytoplasm</location>
    </subcellularLocation>
    <subcellularLocation>
        <location evidence="1">Golgi apparatus membrane</location>
        <topology evidence="1">Peripheral membrane protein</topology>
        <orientation evidence="1">Cytoplasmic side</orientation>
    </subcellularLocation>
    <subcellularLocation>
        <location evidence="1">Cytoplasmic vesicle</location>
        <location evidence="1">COPI-coated vesicle membrane</location>
        <topology evidence="1">Peripheral membrane protein</topology>
        <orientation evidence="1">Cytoplasmic side</orientation>
    </subcellularLocation>
    <text evidence="1">The coatomer is cytoplasmic or polymerized on the cytoplasmic side of the Golgi, as well as on the vesicles/buds originating from it.</text>
</comment>
<comment type="alternative products">
    <event type="alternative splicing"/>
    <isoform>
        <id>Q84LG4-1</id>
        <name>1</name>
        <sequence type="displayed"/>
    </isoform>
    <isoform>
        <id>Q84LG4-2</id>
        <name>2</name>
        <sequence type="described" ref="VSP_027463"/>
    </isoform>
</comment>
<comment type="miscellaneous">
    <molecule>Isoform 2</molecule>
    <text evidence="3">May be due to an intron retention.</text>
</comment>
<comment type="similarity">
    <text evidence="3">Belongs to the adaptor complexes small subunit family.</text>
</comment>
<comment type="sequence caution" evidence="3">
    <conflict type="erroneous gene model prediction">
        <sequence resource="EMBL-CDS" id="AAF23255"/>
    </conflict>
</comment>
<comment type="sequence caution" evidence="3">
    <conflict type="erroneous gene model prediction">
        <sequence resource="EMBL-CDS" id="AAF23308"/>
    </conflict>
</comment>
<reference key="1">
    <citation type="journal article" date="2000" name="Nature">
        <title>Sequence and analysis of chromosome 3 of the plant Arabidopsis thaliana.</title>
        <authorList>
            <person name="Salanoubat M."/>
            <person name="Lemcke K."/>
            <person name="Rieger M."/>
            <person name="Ansorge W."/>
            <person name="Unseld M."/>
            <person name="Fartmann B."/>
            <person name="Valle G."/>
            <person name="Bloecker H."/>
            <person name="Perez-Alonso M."/>
            <person name="Obermaier B."/>
            <person name="Delseny M."/>
            <person name="Boutry M."/>
            <person name="Grivell L.A."/>
            <person name="Mache R."/>
            <person name="Puigdomenech P."/>
            <person name="De Simone V."/>
            <person name="Choisne N."/>
            <person name="Artiguenave F."/>
            <person name="Robert C."/>
            <person name="Brottier P."/>
            <person name="Wincker P."/>
            <person name="Cattolico L."/>
            <person name="Weissenbach J."/>
            <person name="Saurin W."/>
            <person name="Quetier F."/>
            <person name="Schaefer M."/>
            <person name="Mueller-Auer S."/>
            <person name="Gabel C."/>
            <person name="Fuchs M."/>
            <person name="Benes V."/>
            <person name="Wurmbach E."/>
            <person name="Drzonek H."/>
            <person name="Erfle H."/>
            <person name="Jordan N."/>
            <person name="Bangert S."/>
            <person name="Wiedelmann R."/>
            <person name="Kranz H."/>
            <person name="Voss H."/>
            <person name="Holland R."/>
            <person name="Brandt P."/>
            <person name="Nyakatura G."/>
            <person name="Vezzi A."/>
            <person name="D'Angelo M."/>
            <person name="Pallavicini A."/>
            <person name="Toppo S."/>
            <person name="Simionati B."/>
            <person name="Conrad A."/>
            <person name="Hornischer K."/>
            <person name="Kauer G."/>
            <person name="Loehnert T.-H."/>
            <person name="Nordsiek G."/>
            <person name="Reichelt J."/>
            <person name="Scharfe M."/>
            <person name="Schoen O."/>
            <person name="Bargues M."/>
            <person name="Terol J."/>
            <person name="Climent J."/>
            <person name="Navarro P."/>
            <person name="Collado C."/>
            <person name="Perez-Perez A."/>
            <person name="Ottenwaelder B."/>
            <person name="Duchemin D."/>
            <person name="Cooke R."/>
            <person name="Laudie M."/>
            <person name="Berger-Llauro C."/>
            <person name="Purnelle B."/>
            <person name="Masuy D."/>
            <person name="de Haan M."/>
            <person name="Maarse A.C."/>
            <person name="Alcaraz J.-P."/>
            <person name="Cottet A."/>
            <person name="Casacuberta E."/>
            <person name="Monfort A."/>
            <person name="Argiriou A."/>
            <person name="Flores M."/>
            <person name="Liguori R."/>
            <person name="Vitale D."/>
            <person name="Mannhaupt G."/>
            <person name="Haase D."/>
            <person name="Schoof H."/>
            <person name="Rudd S."/>
            <person name="Zaccaria P."/>
            <person name="Mewes H.-W."/>
            <person name="Mayer K.F.X."/>
            <person name="Kaul S."/>
            <person name="Town C.D."/>
            <person name="Koo H.L."/>
            <person name="Tallon L.J."/>
            <person name="Jenkins J."/>
            <person name="Rooney T."/>
            <person name="Rizzo M."/>
            <person name="Walts A."/>
            <person name="Utterback T."/>
            <person name="Fujii C.Y."/>
            <person name="Shea T.P."/>
            <person name="Creasy T.H."/>
            <person name="Haas B."/>
            <person name="Maiti R."/>
            <person name="Wu D."/>
            <person name="Peterson J."/>
            <person name="Van Aken S."/>
            <person name="Pai G."/>
            <person name="Militscher J."/>
            <person name="Sellers P."/>
            <person name="Gill J.E."/>
            <person name="Feldblyum T.V."/>
            <person name="Preuss D."/>
            <person name="Lin X."/>
            <person name="Nierman W.C."/>
            <person name="Salzberg S.L."/>
            <person name="White O."/>
            <person name="Venter J.C."/>
            <person name="Fraser C.M."/>
            <person name="Kaneko T."/>
            <person name="Nakamura Y."/>
            <person name="Sato S."/>
            <person name="Kato T."/>
            <person name="Asamizu E."/>
            <person name="Sasamoto S."/>
            <person name="Kimura T."/>
            <person name="Idesawa K."/>
            <person name="Kawashima K."/>
            <person name="Kishida Y."/>
            <person name="Kiyokawa C."/>
            <person name="Kohara M."/>
            <person name="Matsumoto M."/>
            <person name="Matsuno A."/>
            <person name="Muraki A."/>
            <person name="Nakayama S."/>
            <person name="Nakazaki N."/>
            <person name="Shinpo S."/>
            <person name="Takeuchi C."/>
            <person name="Wada T."/>
            <person name="Watanabe A."/>
            <person name="Yamada M."/>
            <person name="Yasuda M."/>
            <person name="Tabata S."/>
        </authorList>
    </citation>
    <scope>NUCLEOTIDE SEQUENCE [LARGE SCALE GENOMIC DNA]</scope>
    <source>
        <strain>cv. Columbia</strain>
    </source>
</reference>
<reference key="2">
    <citation type="journal article" date="2017" name="Plant J.">
        <title>Araport11: a complete reannotation of the Arabidopsis thaliana reference genome.</title>
        <authorList>
            <person name="Cheng C.Y."/>
            <person name="Krishnakumar V."/>
            <person name="Chan A.P."/>
            <person name="Thibaud-Nissen F."/>
            <person name="Schobel S."/>
            <person name="Town C.D."/>
        </authorList>
    </citation>
    <scope>GENOME REANNOTATION</scope>
    <scope>SEQUENCE REVISION</scope>
    <source>
        <strain>cv. Columbia</strain>
    </source>
</reference>
<reference key="3">
    <citation type="journal article" date="2003" name="Science">
        <title>Empirical analysis of transcriptional activity in the Arabidopsis genome.</title>
        <authorList>
            <person name="Yamada K."/>
            <person name="Lim J."/>
            <person name="Dale J.M."/>
            <person name="Chen H."/>
            <person name="Shinn P."/>
            <person name="Palm C.J."/>
            <person name="Southwick A.M."/>
            <person name="Wu H.C."/>
            <person name="Kim C.J."/>
            <person name="Nguyen M."/>
            <person name="Pham P.K."/>
            <person name="Cheuk R.F."/>
            <person name="Karlin-Newmann G."/>
            <person name="Liu S.X."/>
            <person name="Lam B."/>
            <person name="Sakano H."/>
            <person name="Wu T."/>
            <person name="Yu G."/>
            <person name="Miranda M."/>
            <person name="Quach H.L."/>
            <person name="Tripp M."/>
            <person name="Chang C.H."/>
            <person name="Lee J.M."/>
            <person name="Toriumi M.J."/>
            <person name="Chan M.M."/>
            <person name="Tang C.C."/>
            <person name="Onodera C.S."/>
            <person name="Deng J.M."/>
            <person name="Akiyama K."/>
            <person name="Ansari Y."/>
            <person name="Arakawa T."/>
            <person name="Banh J."/>
            <person name="Banno F."/>
            <person name="Bowser L."/>
            <person name="Brooks S.Y."/>
            <person name="Carninci P."/>
            <person name="Chao Q."/>
            <person name="Choy N."/>
            <person name="Enju A."/>
            <person name="Goldsmith A.D."/>
            <person name="Gurjal M."/>
            <person name="Hansen N.F."/>
            <person name="Hayashizaki Y."/>
            <person name="Johnson-Hopson C."/>
            <person name="Hsuan V.W."/>
            <person name="Iida K."/>
            <person name="Karnes M."/>
            <person name="Khan S."/>
            <person name="Koesema E."/>
            <person name="Ishida J."/>
            <person name="Jiang P.X."/>
            <person name="Jones T."/>
            <person name="Kawai J."/>
            <person name="Kamiya A."/>
            <person name="Meyers C."/>
            <person name="Nakajima M."/>
            <person name="Narusaka M."/>
            <person name="Seki M."/>
            <person name="Sakurai T."/>
            <person name="Satou M."/>
            <person name="Tamse R."/>
            <person name="Vaysberg M."/>
            <person name="Wallender E.K."/>
            <person name="Wong C."/>
            <person name="Yamamura Y."/>
            <person name="Yuan S."/>
            <person name="Shinozaki K."/>
            <person name="Davis R.W."/>
            <person name="Theologis A."/>
            <person name="Ecker J.R."/>
        </authorList>
    </citation>
    <scope>NUCLEOTIDE SEQUENCE [LARGE SCALE MRNA] (ISOFORM 1)</scope>
    <source>
        <strain>cv. Columbia</strain>
    </source>
</reference>
<reference key="4">
    <citation type="submission" date="2004-08" db="EMBL/GenBank/DDBJ databases">
        <title>Arabidopsis ORF clones.</title>
        <authorList>
            <person name="Cheuk R.F."/>
            <person name="Chen H."/>
            <person name="Kim C.J."/>
            <person name="Shinn P."/>
            <person name="Ecker J.R."/>
        </authorList>
    </citation>
    <scope>NUCLEOTIDE SEQUENCE [LARGE SCALE MRNA] (ISOFORM 1)</scope>
    <source>
        <strain>cv. Columbia</strain>
    </source>
</reference>
<organism>
    <name type="scientific">Arabidopsis thaliana</name>
    <name type="common">Mouse-ear cress</name>
    <dbReference type="NCBI Taxonomy" id="3702"/>
    <lineage>
        <taxon>Eukaryota</taxon>
        <taxon>Viridiplantae</taxon>
        <taxon>Streptophyta</taxon>
        <taxon>Embryophyta</taxon>
        <taxon>Tracheophyta</taxon>
        <taxon>Spermatophyta</taxon>
        <taxon>Magnoliopsida</taxon>
        <taxon>eudicotyledons</taxon>
        <taxon>Gunneridae</taxon>
        <taxon>Pentapetalae</taxon>
        <taxon>rosids</taxon>
        <taxon>malvids</taxon>
        <taxon>Brassicales</taxon>
        <taxon>Brassicaceae</taxon>
        <taxon>Camelineae</taxon>
        <taxon>Arabidopsis</taxon>
    </lineage>
</organism>
<keyword id="KW-0025">Alternative splicing</keyword>
<keyword id="KW-0963">Cytoplasm</keyword>
<keyword id="KW-0968">Cytoplasmic vesicle</keyword>
<keyword id="KW-0931">ER-Golgi transport</keyword>
<keyword id="KW-0333">Golgi apparatus</keyword>
<keyword id="KW-0472">Membrane</keyword>
<keyword id="KW-0653">Protein transport</keyword>
<keyword id="KW-1185">Reference proteome</keyword>
<keyword id="KW-0813">Transport</keyword>